<keyword id="KW-0028">Amino-acid biosynthesis</keyword>
<keyword id="KW-0368">Histidine biosynthesis</keyword>
<keyword id="KW-0378">Hydrolase</keyword>
<keyword id="KW-0486">Methionine biosynthesis</keyword>
<keyword id="KW-0511">Multifunctional enzyme</keyword>
<keyword id="KW-0521">NADP</keyword>
<keyword id="KW-0554">One-carbon metabolism</keyword>
<keyword id="KW-0560">Oxidoreductase</keyword>
<keyword id="KW-0658">Purine biosynthesis</keyword>
<keyword id="KW-1185">Reference proteome</keyword>
<dbReference type="EC" id="1.5.1.5" evidence="1"/>
<dbReference type="EC" id="3.5.4.9" evidence="1"/>
<dbReference type="EMBL" id="CP000238">
    <property type="protein sequence ID" value="ABF13955.1"/>
    <property type="molecule type" value="Genomic_DNA"/>
</dbReference>
<dbReference type="RefSeq" id="WP_011520326.1">
    <property type="nucleotide sequence ID" value="NC_007984.1"/>
</dbReference>
<dbReference type="SMR" id="Q1LTX1"/>
<dbReference type="STRING" id="374463.BCI_0122"/>
<dbReference type="KEGG" id="bci:BCI_0122"/>
<dbReference type="HOGENOM" id="CLU_034045_2_1_6"/>
<dbReference type="OrthoDB" id="9803580at2"/>
<dbReference type="UniPathway" id="UPA00193"/>
<dbReference type="Proteomes" id="UP000002427">
    <property type="component" value="Chromosome"/>
</dbReference>
<dbReference type="GO" id="GO:0005829">
    <property type="term" value="C:cytosol"/>
    <property type="evidence" value="ECO:0007669"/>
    <property type="project" value="TreeGrafter"/>
</dbReference>
<dbReference type="GO" id="GO:0004477">
    <property type="term" value="F:methenyltetrahydrofolate cyclohydrolase activity"/>
    <property type="evidence" value="ECO:0007669"/>
    <property type="project" value="UniProtKB-UniRule"/>
</dbReference>
<dbReference type="GO" id="GO:0004488">
    <property type="term" value="F:methylenetetrahydrofolate dehydrogenase (NADP+) activity"/>
    <property type="evidence" value="ECO:0007669"/>
    <property type="project" value="UniProtKB-UniRule"/>
</dbReference>
<dbReference type="GO" id="GO:0000105">
    <property type="term" value="P:L-histidine biosynthetic process"/>
    <property type="evidence" value="ECO:0007669"/>
    <property type="project" value="UniProtKB-KW"/>
</dbReference>
<dbReference type="GO" id="GO:0009086">
    <property type="term" value="P:methionine biosynthetic process"/>
    <property type="evidence" value="ECO:0007669"/>
    <property type="project" value="UniProtKB-KW"/>
</dbReference>
<dbReference type="GO" id="GO:0006164">
    <property type="term" value="P:purine nucleotide biosynthetic process"/>
    <property type="evidence" value="ECO:0007669"/>
    <property type="project" value="UniProtKB-KW"/>
</dbReference>
<dbReference type="GO" id="GO:0035999">
    <property type="term" value="P:tetrahydrofolate interconversion"/>
    <property type="evidence" value="ECO:0007669"/>
    <property type="project" value="UniProtKB-UniRule"/>
</dbReference>
<dbReference type="CDD" id="cd01080">
    <property type="entry name" value="NAD_bind_m-THF_DH_Cyclohyd"/>
    <property type="match status" value="1"/>
</dbReference>
<dbReference type="FunFam" id="3.40.50.720:FF:000006">
    <property type="entry name" value="Bifunctional protein FolD"/>
    <property type="match status" value="1"/>
</dbReference>
<dbReference type="FunFam" id="3.40.50.10860:FF:000005">
    <property type="entry name" value="C-1-tetrahydrofolate synthase, cytoplasmic, putative"/>
    <property type="match status" value="1"/>
</dbReference>
<dbReference type="Gene3D" id="3.40.50.10860">
    <property type="entry name" value="Leucine Dehydrogenase, chain A, domain 1"/>
    <property type="match status" value="1"/>
</dbReference>
<dbReference type="Gene3D" id="3.40.50.720">
    <property type="entry name" value="NAD(P)-binding Rossmann-like Domain"/>
    <property type="match status" value="1"/>
</dbReference>
<dbReference type="HAMAP" id="MF_01576">
    <property type="entry name" value="THF_DHG_CYH"/>
    <property type="match status" value="1"/>
</dbReference>
<dbReference type="InterPro" id="IPR046346">
    <property type="entry name" value="Aminoacid_DH-like_N_sf"/>
</dbReference>
<dbReference type="InterPro" id="IPR036291">
    <property type="entry name" value="NAD(P)-bd_dom_sf"/>
</dbReference>
<dbReference type="InterPro" id="IPR000672">
    <property type="entry name" value="THF_DH/CycHdrlase"/>
</dbReference>
<dbReference type="InterPro" id="IPR020630">
    <property type="entry name" value="THF_DH/CycHdrlase_cat_dom"/>
</dbReference>
<dbReference type="InterPro" id="IPR020867">
    <property type="entry name" value="THF_DH/CycHdrlase_CS"/>
</dbReference>
<dbReference type="InterPro" id="IPR020631">
    <property type="entry name" value="THF_DH/CycHdrlase_NAD-bd_dom"/>
</dbReference>
<dbReference type="NCBIfam" id="NF008058">
    <property type="entry name" value="PRK10792.1"/>
    <property type="match status" value="1"/>
</dbReference>
<dbReference type="PANTHER" id="PTHR48099:SF5">
    <property type="entry name" value="C-1-TETRAHYDROFOLATE SYNTHASE, CYTOPLASMIC"/>
    <property type="match status" value="1"/>
</dbReference>
<dbReference type="PANTHER" id="PTHR48099">
    <property type="entry name" value="C-1-TETRAHYDROFOLATE SYNTHASE, CYTOPLASMIC-RELATED"/>
    <property type="match status" value="1"/>
</dbReference>
<dbReference type="Pfam" id="PF00763">
    <property type="entry name" value="THF_DHG_CYH"/>
    <property type="match status" value="1"/>
</dbReference>
<dbReference type="Pfam" id="PF02882">
    <property type="entry name" value="THF_DHG_CYH_C"/>
    <property type="match status" value="1"/>
</dbReference>
<dbReference type="PRINTS" id="PR00085">
    <property type="entry name" value="THFDHDRGNASE"/>
</dbReference>
<dbReference type="SUPFAM" id="SSF53223">
    <property type="entry name" value="Aminoacid dehydrogenase-like, N-terminal domain"/>
    <property type="match status" value="1"/>
</dbReference>
<dbReference type="SUPFAM" id="SSF51735">
    <property type="entry name" value="NAD(P)-binding Rossmann-fold domains"/>
    <property type="match status" value="1"/>
</dbReference>
<dbReference type="PROSITE" id="PS00766">
    <property type="entry name" value="THF_DHG_CYH_1"/>
    <property type="match status" value="1"/>
</dbReference>
<dbReference type="PROSITE" id="PS00767">
    <property type="entry name" value="THF_DHG_CYH_2"/>
    <property type="match status" value="1"/>
</dbReference>
<proteinExistence type="inferred from homology"/>
<reference key="1">
    <citation type="journal article" date="2006" name="PLoS Biol.">
        <title>Metabolic complementarity and genomics of the dual bacterial symbiosis of sharpshooters.</title>
        <authorList>
            <person name="Wu D."/>
            <person name="Daugherty S.C."/>
            <person name="Van Aken S.E."/>
            <person name="Pai G.H."/>
            <person name="Watkins K.L."/>
            <person name="Khouri H."/>
            <person name="Tallon L.J."/>
            <person name="Zaborsky J.M."/>
            <person name="Dunbar H.E."/>
            <person name="Tran P.L."/>
            <person name="Moran N.A."/>
            <person name="Eisen J.A."/>
        </authorList>
    </citation>
    <scope>NUCLEOTIDE SEQUENCE [LARGE SCALE GENOMIC DNA]</scope>
</reference>
<feature type="chain" id="PRO_0000268278" description="Bifunctional protein FolD">
    <location>
        <begin position="1"/>
        <end position="285"/>
    </location>
</feature>
<feature type="binding site" evidence="1">
    <location>
        <begin position="166"/>
        <end position="168"/>
    </location>
    <ligand>
        <name>NADP(+)</name>
        <dbReference type="ChEBI" id="CHEBI:58349"/>
    </ligand>
</feature>
<feature type="binding site" evidence="1">
    <location>
        <position position="232"/>
    </location>
    <ligand>
        <name>NADP(+)</name>
        <dbReference type="ChEBI" id="CHEBI:58349"/>
    </ligand>
</feature>
<name>FOLD_BAUCH</name>
<accession>Q1LTX1</accession>
<protein>
    <recommendedName>
        <fullName evidence="1">Bifunctional protein FolD</fullName>
    </recommendedName>
    <domain>
        <recommendedName>
            <fullName evidence="1">Methylenetetrahydrofolate dehydrogenase</fullName>
            <ecNumber evidence="1">1.5.1.5</ecNumber>
        </recommendedName>
    </domain>
    <domain>
        <recommendedName>
            <fullName evidence="1">Methenyltetrahydrofolate cyclohydrolase</fullName>
            <ecNumber evidence="1">3.5.4.9</ecNumber>
        </recommendedName>
    </domain>
</protein>
<comment type="function">
    <text evidence="1">Catalyzes the oxidation of 5,10-methylenetetrahydrofolate to 5,10-methenyltetrahydrofolate and then the hydrolysis of 5,10-methenyltetrahydrofolate to 10-formyltetrahydrofolate.</text>
</comment>
<comment type="catalytic activity">
    <reaction evidence="1">
        <text>(6R)-5,10-methylene-5,6,7,8-tetrahydrofolate + NADP(+) = (6R)-5,10-methenyltetrahydrofolate + NADPH</text>
        <dbReference type="Rhea" id="RHEA:22812"/>
        <dbReference type="ChEBI" id="CHEBI:15636"/>
        <dbReference type="ChEBI" id="CHEBI:57455"/>
        <dbReference type="ChEBI" id="CHEBI:57783"/>
        <dbReference type="ChEBI" id="CHEBI:58349"/>
        <dbReference type="EC" id="1.5.1.5"/>
    </reaction>
</comment>
<comment type="catalytic activity">
    <reaction evidence="1">
        <text>(6R)-5,10-methenyltetrahydrofolate + H2O = (6R)-10-formyltetrahydrofolate + H(+)</text>
        <dbReference type="Rhea" id="RHEA:23700"/>
        <dbReference type="ChEBI" id="CHEBI:15377"/>
        <dbReference type="ChEBI" id="CHEBI:15378"/>
        <dbReference type="ChEBI" id="CHEBI:57455"/>
        <dbReference type="ChEBI" id="CHEBI:195366"/>
        <dbReference type="EC" id="3.5.4.9"/>
    </reaction>
</comment>
<comment type="pathway">
    <text evidence="1">One-carbon metabolism; tetrahydrofolate interconversion.</text>
</comment>
<comment type="subunit">
    <text evidence="1">Homodimer.</text>
</comment>
<comment type="similarity">
    <text evidence="1">Belongs to the tetrahydrofolate dehydrogenase/cyclohydrolase family.</text>
</comment>
<gene>
    <name evidence="1" type="primary">folD</name>
    <name type="ordered locus">BCI_0122</name>
</gene>
<evidence type="ECO:0000255" key="1">
    <source>
        <dbReference type="HAMAP-Rule" id="MF_01576"/>
    </source>
</evidence>
<sequence length="285" mass="30701">MVAQIIDGKKIAQQIKSEVAHLVQMRIKAGDAAPCLAVVLVGHDSASQMYVTSKRKTCESIGFISLAYDLPNNVSETELLMLIDQLNTNHSVDGILIQLPLPVGIDNIRVLEQIAPHKDVDGFHPYNLGRLCQRAPLLRPCTPRGVITLLERYNINIVGLNAVVVGASNIVGRPMGMELLLAGCTVTITHRFTRNLQQHVQNADLLVVAVGKAGFIPGSWIKSGAIVIDIGINCLDNGKVVGDVNFSEAIERAAYITPVPGGVGPMTVATLIQNTLQACKYRKLS</sequence>
<organism>
    <name type="scientific">Baumannia cicadellinicola subsp. Homalodisca coagulata</name>
    <dbReference type="NCBI Taxonomy" id="374463"/>
    <lineage>
        <taxon>Bacteria</taxon>
        <taxon>Pseudomonadati</taxon>
        <taxon>Pseudomonadota</taxon>
        <taxon>Gammaproteobacteria</taxon>
        <taxon>Candidatus Palibaumannia</taxon>
    </lineage>
</organism>